<name>ATNB_EMENI</name>
<protein>
    <recommendedName>
        <fullName evidence="5">Aspercryptin biosynthesis cluster protein B</fullName>
    </recommendedName>
</protein>
<reference key="1">
    <citation type="journal article" date="2005" name="Nature">
        <title>Sequencing of Aspergillus nidulans and comparative analysis with A. fumigatus and A. oryzae.</title>
        <authorList>
            <person name="Galagan J.E."/>
            <person name="Calvo S.E."/>
            <person name="Cuomo C."/>
            <person name="Ma L.-J."/>
            <person name="Wortman J.R."/>
            <person name="Batzoglou S."/>
            <person name="Lee S.-I."/>
            <person name="Bastuerkmen M."/>
            <person name="Spevak C.C."/>
            <person name="Clutterbuck J."/>
            <person name="Kapitonov V."/>
            <person name="Jurka J."/>
            <person name="Scazzocchio C."/>
            <person name="Farman M.L."/>
            <person name="Butler J."/>
            <person name="Purcell S."/>
            <person name="Harris S."/>
            <person name="Braus G.H."/>
            <person name="Draht O."/>
            <person name="Busch S."/>
            <person name="D'Enfert C."/>
            <person name="Bouchier C."/>
            <person name="Goldman G.H."/>
            <person name="Bell-Pedersen D."/>
            <person name="Griffiths-Jones S."/>
            <person name="Doonan J.H."/>
            <person name="Yu J."/>
            <person name="Vienken K."/>
            <person name="Pain A."/>
            <person name="Freitag M."/>
            <person name="Selker E.U."/>
            <person name="Archer D.B."/>
            <person name="Penalva M.A."/>
            <person name="Oakley B.R."/>
            <person name="Momany M."/>
            <person name="Tanaka T."/>
            <person name="Kumagai T."/>
            <person name="Asai K."/>
            <person name="Machida M."/>
            <person name="Nierman W.C."/>
            <person name="Denning D.W."/>
            <person name="Caddick M.X."/>
            <person name="Hynes M."/>
            <person name="Paoletti M."/>
            <person name="Fischer R."/>
            <person name="Miller B.L."/>
            <person name="Dyer P.S."/>
            <person name="Sachs M.S."/>
            <person name="Osmani S.A."/>
            <person name="Birren B.W."/>
        </authorList>
    </citation>
    <scope>NUCLEOTIDE SEQUENCE [LARGE SCALE GENOMIC DNA]</scope>
    <source>
        <strain>FGSC A4 / ATCC 38163 / CBS 112.46 / NRRL 194 / M139</strain>
    </source>
</reference>
<reference key="2">
    <citation type="journal article" date="2009" name="Fungal Genet. Biol.">
        <title>The 2008 update of the Aspergillus nidulans genome annotation: a community effort.</title>
        <authorList>
            <person name="Wortman J.R."/>
            <person name="Gilsenan J.M."/>
            <person name="Joardar V."/>
            <person name="Deegan J."/>
            <person name="Clutterbuck J."/>
            <person name="Andersen M.R."/>
            <person name="Archer D."/>
            <person name="Bencina M."/>
            <person name="Braus G."/>
            <person name="Coutinho P."/>
            <person name="von Dohren H."/>
            <person name="Doonan J."/>
            <person name="Driessen A.J."/>
            <person name="Durek P."/>
            <person name="Espeso E."/>
            <person name="Fekete E."/>
            <person name="Flipphi M."/>
            <person name="Estrada C.G."/>
            <person name="Geysens S."/>
            <person name="Goldman G."/>
            <person name="de Groot P.W."/>
            <person name="Hansen K."/>
            <person name="Harris S.D."/>
            <person name="Heinekamp T."/>
            <person name="Helmstaedt K."/>
            <person name="Henrissat B."/>
            <person name="Hofmann G."/>
            <person name="Homan T."/>
            <person name="Horio T."/>
            <person name="Horiuchi H."/>
            <person name="James S."/>
            <person name="Jones M."/>
            <person name="Karaffa L."/>
            <person name="Karanyi Z."/>
            <person name="Kato M."/>
            <person name="Keller N."/>
            <person name="Kelly D.E."/>
            <person name="Kiel J.A."/>
            <person name="Kim J.M."/>
            <person name="van der Klei I.J."/>
            <person name="Klis F.M."/>
            <person name="Kovalchuk A."/>
            <person name="Krasevec N."/>
            <person name="Kubicek C.P."/>
            <person name="Liu B."/>
            <person name="Maccabe A."/>
            <person name="Meyer V."/>
            <person name="Mirabito P."/>
            <person name="Miskei M."/>
            <person name="Mos M."/>
            <person name="Mullins J."/>
            <person name="Nelson D.R."/>
            <person name="Nielsen J."/>
            <person name="Oakley B.R."/>
            <person name="Osmani S.A."/>
            <person name="Pakula T."/>
            <person name="Paszewski A."/>
            <person name="Paulsen I."/>
            <person name="Pilsyk S."/>
            <person name="Pocsi I."/>
            <person name="Punt P.J."/>
            <person name="Ram A.F."/>
            <person name="Ren Q."/>
            <person name="Robellet X."/>
            <person name="Robson G."/>
            <person name="Seiboth B."/>
            <person name="van Solingen P."/>
            <person name="Specht T."/>
            <person name="Sun J."/>
            <person name="Taheri-Talesh N."/>
            <person name="Takeshita N."/>
            <person name="Ussery D."/>
            <person name="vanKuyk P.A."/>
            <person name="Visser H."/>
            <person name="van de Vondervoort P.J."/>
            <person name="de Vries R.P."/>
            <person name="Walton J."/>
            <person name="Xiang X."/>
            <person name="Xiong Y."/>
            <person name="Zeng A.P."/>
            <person name="Brandt B.W."/>
            <person name="Cornell M.J."/>
            <person name="van den Hondel C.A."/>
            <person name="Visser J."/>
            <person name="Oliver S.G."/>
            <person name="Turner G."/>
        </authorList>
    </citation>
    <scope>GENOME REANNOTATION</scope>
    <source>
        <strain>FGSC A4 / ATCC 38163 / CBS 112.46 / NRRL 194 / M139</strain>
    </source>
</reference>
<reference key="3">
    <citation type="journal article" date="2013" name="Proc. Natl. Acad. Sci. U.S.A.">
        <title>Accurate prediction of secondary metabolite gene clusters in filamentous fungi.</title>
        <authorList>
            <person name="Andersen M.R."/>
            <person name="Nielsen J.B."/>
            <person name="Klitgaard A."/>
            <person name="Petersen L.M."/>
            <person name="Zachariasen M."/>
            <person name="Hansen T.J."/>
            <person name="Blicher L.H."/>
            <person name="Gotfredsen C.H."/>
            <person name="Larsen T.O."/>
            <person name="Nielsen K.F."/>
            <person name="Mortensen U.H."/>
        </authorList>
    </citation>
    <scope>IDENTIFICATION OF THE CLUSTER</scope>
</reference>
<reference key="4">
    <citation type="journal article" date="2016" name="ACS Chem. Biol.">
        <title>New aspercryptins, lipopeptide natural products, revealed by HDAC inhibition in Aspergillus nidulans.</title>
        <authorList>
            <person name="Henke M.T."/>
            <person name="Soukup A.A."/>
            <person name="Goering A.W."/>
            <person name="McClure R.A."/>
            <person name="Thomson R.J."/>
            <person name="Keller N.P."/>
            <person name="Kelleher N.L."/>
        </authorList>
    </citation>
    <scope>FUNCTION</scope>
    <scope>INDUCTION</scope>
</reference>
<reference key="5">
    <citation type="journal article" date="2016" name="Angew. Chem. Int. Ed.">
        <title>Development of genetic dereplication strains in Aspergillus nidulans results in the discovery of aspercryptin.</title>
        <authorList>
            <person name="Chiang Y.M."/>
            <person name="Ahuja M."/>
            <person name="Oakley C.E."/>
            <person name="Entwistle R."/>
            <person name="Asokan A."/>
            <person name="Zutz C."/>
            <person name="Wang C.C."/>
            <person name="Oakley B.R."/>
        </authorList>
    </citation>
    <scope>FUNCTION</scope>
    <scope>DISRUPTION PHENOTYPE</scope>
    <scope>PATHWAY</scope>
</reference>
<proteinExistence type="evidence at transcript level"/>
<sequence>MRMANRIGAGRKSALQLSHLRTRLTSSAAAVATAPTLDPAPVPAPAAAPREWLVLFPDMPNVLDRRLEIRPRHSPNFVRLHKEQWVTWAGPIFEKHTFPGNPRRPFKGSVMVVNDVSKEQIWERLKSDPYIQERIWDLDNARVIPFVTNMRRTPKK</sequence>
<evidence type="ECO:0000255" key="1"/>
<evidence type="ECO:0000269" key="2">
    <source>
    </source>
</evidence>
<evidence type="ECO:0000269" key="3">
    <source>
    </source>
</evidence>
<evidence type="ECO:0000269" key="4">
    <source>
    </source>
</evidence>
<evidence type="ECO:0000303" key="5">
    <source>
    </source>
</evidence>
<evidence type="ECO:0000305" key="6"/>
<accession>Q5AUZ7</accession>
<accession>A0A1U8QJQ7</accession>
<accession>C8V3Y9</accession>
<gene>
    <name evidence="5" type="primary">atnB</name>
    <name type="ORF">ANIA_07883</name>
</gene>
<keyword id="KW-1185">Reference proteome</keyword>
<keyword id="KW-0732">Signal</keyword>
<dbReference type="EMBL" id="BN001302">
    <property type="protein sequence ID" value="CBF73451.1"/>
    <property type="molecule type" value="Genomic_DNA"/>
</dbReference>
<dbReference type="EMBL" id="AACD01000135">
    <property type="protein sequence ID" value="EAA59537.1"/>
    <property type="molecule type" value="Genomic_DNA"/>
</dbReference>
<dbReference type="RefSeq" id="XP_681152.1">
    <property type="nucleotide sequence ID" value="XM_676060.1"/>
</dbReference>
<dbReference type="SMR" id="Q5AUZ7"/>
<dbReference type="STRING" id="227321.Q5AUZ7"/>
<dbReference type="EnsemblFungi" id="CBF73451">
    <property type="protein sequence ID" value="CBF73451"/>
    <property type="gene ID" value="ANIA_07883"/>
</dbReference>
<dbReference type="GeneID" id="2869016"/>
<dbReference type="KEGG" id="ani:ANIA_07883"/>
<dbReference type="VEuPathDB" id="FungiDB:AN7883"/>
<dbReference type="HOGENOM" id="CLU_110355_2_0_1"/>
<dbReference type="InParanoid" id="Q5AUZ7"/>
<dbReference type="OMA" id="FAKEGIW"/>
<dbReference type="OrthoDB" id="5519740at2759"/>
<dbReference type="Proteomes" id="UP000000560">
    <property type="component" value="Chromosome II"/>
</dbReference>
<dbReference type="Gene3D" id="3.30.70.1060">
    <property type="entry name" value="Dimeric alpha+beta barrel"/>
    <property type="match status" value="1"/>
</dbReference>
<dbReference type="InterPro" id="IPR011008">
    <property type="entry name" value="Dimeric_a/b-barrel"/>
</dbReference>
<dbReference type="InterPro" id="IPR051807">
    <property type="entry name" value="Sec-metab_biosynth-assoc"/>
</dbReference>
<dbReference type="PANTHER" id="PTHR33606">
    <property type="entry name" value="PROTEIN YCII"/>
    <property type="match status" value="1"/>
</dbReference>
<dbReference type="PANTHER" id="PTHR33606:SF3">
    <property type="entry name" value="PROTEIN YCII"/>
    <property type="match status" value="1"/>
</dbReference>
<dbReference type="SUPFAM" id="SSF54909">
    <property type="entry name" value="Dimeric alpha+beta barrel"/>
    <property type="match status" value="1"/>
</dbReference>
<comment type="function">
    <text evidence="2 3 4">Part of the gene cluster that mediates the biosynthesis of aspercryptins, linear lipopeptides built from six amino acids including 2 highly unusual and nonproteogenic amino acids, 2-amino-octanoic acid (2aoa) and 2-amino-dodecanol (2adol) (PubMed:23248299, PubMed:26563584, PubMed:27310134). The core structure of aspercryptins is as follows: Ser/Ala-Thr-Ile/Val-2aoa-Aasn-2adol (PubMed:27310134). The first step of aspercryptin biosynthesis is the generation of the fatty acid precursors, octanoic and dodecanoic acids, by the FAS subunits atnF and atnM (PubMed:26563584, PubMed:27310134). The fatty acid precursors are likely transformed into the corresponding alpha-amino fatty acids in three steps (PubMed:26563584, PubMed:27310134). First, they are hydroxylated by the cytochrome P450 monooxygenase atnE, then oxidized to the corresponding alpha-keto acids by the NAD(P)-dependent oxidoreductase atnD, and finally converted to the alpha-amino fatty acids by the PLP-dependent aminotransferases atnH or atnJ (PubMed:26563584, PubMed:27310134). the alpha-amino fatty acids, 2-amino-octanoic and 2-amino-dodecanoic acids, are recognized, activated, and covalently tethered to the NRPS atnA by its fourth and sixth adenylation domains (PubMed:27310134). The second module of atnA is the Thr module and contains an epimerase (E) domain responsible for the epimerization of Thr to D-allo-Thr (PubMed:26563584). Additionally, despite atnA having only one epimerase domain, the first amino acid of aspercryptin A1 is D-Ser, suggesting that serine is either loaded directly as D-Ser on the first module or that the epimerase domain in the threonine module epimerizes both L-Ser and L-Thr (PubMed:27310134). After condensation of the hexapeptide of aspercryptin, the C-terminal reductase (TE) domain might be involved in the reductive release and production of the aldehyde hexapeptide (PubMed:26563584). Further reduction would generate aspercryptins (PubMed:26563584, PubMed:27310134). The variety of aspercryptins produced reflects the flexibility of the atnA NRPS, allowing incorporation of alanine instead of serine, valine for isoleucine, and a C10 fatty amino alcohol instead of the C12 version (PubMed:27310134). AtnB seems to be involved in the selectivity for Ile versus Val by the third module (PubMed:26563584). Moreover, type B, C and D aspercryptins have an additional N-terminal cichorine, acetyl and propionyl group respectively (PubMed:27310134).</text>
</comment>
<comment type="pathway">
    <text evidence="3">Secondary metabolite biosynthesis.</text>
</comment>
<comment type="induction">
    <text evidence="4">Expression is positively regulated by the aspercryptin cluser-specific transcription factor atnN (PubMed:27310134).</text>
</comment>
<comment type="disruption phenotype">
    <text evidence="3">Decreases the production of aspercryptin by more than 80% but increases the titer of aspercryptin with Ile replaced by Val more than six-fold (PubMed:26563584).</text>
</comment>
<comment type="similarity">
    <text evidence="6">Belongs to the YciI family.</text>
</comment>
<organism>
    <name type="scientific">Emericella nidulans (strain FGSC A4 / ATCC 38163 / CBS 112.46 / NRRL 194 / M139)</name>
    <name type="common">Aspergillus nidulans</name>
    <dbReference type="NCBI Taxonomy" id="227321"/>
    <lineage>
        <taxon>Eukaryota</taxon>
        <taxon>Fungi</taxon>
        <taxon>Dikarya</taxon>
        <taxon>Ascomycota</taxon>
        <taxon>Pezizomycotina</taxon>
        <taxon>Eurotiomycetes</taxon>
        <taxon>Eurotiomycetidae</taxon>
        <taxon>Eurotiales</taxon>
        <taxon>Aspergillaceae</taxon>
        <taxon>Aspergillus</taxon>
        <taxon>Aspergillus subgen. Nidulantes</taxon>
    </lineage>
</organism>
<feature type="signal peptide" evidence="1">
    <location>
        <begin position="1"/>
        <end position="39"/>
    </location>
</feature>
<feature type="chain" id="PRO_0000444138" description="Aspercryptin biosynthesis cluster protein B">
    <location>
        <begin position="40"/>
        <end position="156"/>
    </location>
</feature>